<dbReference type="EMBL" id="X03978">
    <property type="protein sequence ID" value="CAA27617.1"/>
    <property type="molecule type" value="mRNA"/>
</dbReference>
<dbReference type="PIR" id="S07315">
    <property type="entry name" value="S07315"/>
</dbReference>
<dbReference type="RefSeq" id="NP_001235842.1">
    <property type="nucleotide sequence ID" value="NM_001248913.2"/>
</dbReference>
<dbReference type="STRING" id="3847.P04671"/>
<dbReference type="PaxDb" id="3847-GLYMA20G02921.1"/>
<dbReference type="EnsemblPlants" id="KRG89457">
    <property type="protein sequence ID" value="KRG89457"/>
    <property type="gene ID" value="GLYMA_20G024200"/>
</dbReference>
<dbReference type="GeneID" id="547902"/>
<dbReference type="Gramene" id="KRG89457">
    <property type="protein sequence ID" value="KRG89457"/>
    <property type="gene ID" value="GLYMA_20G024200"/>
</dbReference>
<dbReference type="KEGG" id="gmx:547902"/>
<dbReference type="HOGENOM" id="CLU_1263466_0_0_1"/>
<dbReference type="InParanoid" id="P04671"/>
<dbReference type="Proteomes" id="UP000008827">
    <property type="component" value="Chromosome 20"/>
</dbReference>
<dbReference type="GO" id="GO:0009877">
    <property type="term" value="P:nodulation"/>
    <property type="evidence" value="ECO:0007669"/>
    <property type="project" value="UniProtKB-KW"/>
</dbReference>
<dbReference type="InterPro" id="IPR003387">
    <property type="entry name" value="Nodulin"/>
</dbReference>
<dbReference type="Pfam" id="PF02451">
    <property type="entry name" value="Nodulin"/>
    <property type="match status" value="2"/>
</dbReference>
<organism>
    <name type="scientific">Glycine max</name>
    <name type="common">Soybean</name>
    <name type="synonym">Glycine hispida</name>
    <dbReference type="NCBI Taxonomy" id="3847"/>
    <lineage>
        <taxon>Eukaryota</taxon>
        <taxon>Viridiplantae</taxon>
        <taxon>Streptophyta</taxon>
        <taxon>Embryophyta</taxon>
        <taxon>Tracheophyta</taxon>
        <taxon>Spermatophyta</taxon>
        <taxon>Magnoliopsida</taxon>
        <taxon>eudicotyledons</taxon>
        <taxon>Gunneridae</taxon>
        <taxon>Pentapetalae</taxon>
        <taxon>rosids</taxon>
        <taxon>fabids</taxon>
        <taxon>Fabales</taxon>
        <taxon>Fabaceae</taxon>
        <taxon>Papilionoideae</taxon>
        <taxon>50 kb inversion clade</taxon>
        <taxon>NPAAA clade</taxon>
        <taxon>indigoferoid/millettioid clade</taxon>
        <taxon>Phaseoleae</taxon>
        <taxon>Glycine</taxon>
        <taxon>Glycine subgen. Soja</taxon>
    </lineage>
</organism>
<proteinExistence type="evidence at transcript level"/>
<sequence>MEKMRVIVITVFLFIGAAIAEDVGIGLLSEAEAYVSPKLKKFITPCTSHVGETCSTTSSSGSEALMQNQGGLALCLFDSMERCLVDHGAQLYQTSVTNLQVEPSEVFPRKNNPQGGRKSKLDDHQVQPLSFRLPPFRLPPMPKLGPTSPIIRTIPSPPIAPRDLSLIETIQLRTALRTCTHVTARTCLTAPNVATSDLEACLTPSMNQCIYPRGAEYGSPPIRA</sequence>
<accession>P04671</accession>
<protein>
    <recommendedName>
        <fullName>Nodulin-C51</fullName>
    </recommendedName>
</protein>
<comment type="function">
    <text>Involved in the infection process during the plant-rhizobium interaction.</text>
</comment>
<comment type="similarity">
    <text evidence="3">Belongs to the nodulin 20 family.</text>
</comment>
<comment type="caution">
    <text evidence="3">It is uncertain whether Met-1 or Met-4 is the initiator.</text>
</comment>
<name>NO51_SOYBN</name>
<keyword id="KW-0536">Nodulation</keyword>
<keyword id="KW-1185">Reference proteome</keyword>
<keyword id="KW-0732">Signal</keyword>
<evidence type="ECO:0000255" key="1"/>
<evidence type="ECO:0000256" key="2">
    <source>
        <dbReference type="SAM" id="MobiDB-lite"/>
    </source>
</evidence>
<evidence type="ECO:0000305" key="3"/>
<reference key="1">
    <citation type="journal article" date="1986" name="Mol. Gen. Genet.">
        <title>Expression of host genes during root nodule development in soybeans.</title>
        <authorList>
            <person name="Sengupta-Gopalan C."/>
            <person name="Pitas J.W."/>
            <person name="Thompson D.V."/>
            <person name="Hoffman L.M."/>
        </authorList>
    </citation>
    <scope>NUCLEOTIDE SEQUENCE [MRNA]</scope>
    <source>
        <tissue>Root nodule</tissue>
    </source>
</reference>
<feature type="signal peptide" evidence="1">
    <location>
        <begin position="1"/>
        <end position="20"/>
    </location>
</feature>
<feature type="chain" id="PRO_0000019792" description="Nodulin-C51">
    <location>
        <begin position="21"/>
        <end position="224"/>
    </location>
</feature>
<feature type="region of interest" description="Disordered" evidence="2">
    <location>
        <begin position="103"/>
        <end position="124"/>
    </location>
</feature>